<proteinExistence type="inferred from homology"/>
<name>RS11_MYCLE</name>
<organism>
    <name type="scientific">Mycobacterium leprae (strain TN)</name>
    <dbReference type="NCBI Taxonomy" id="272631"/>
    <lineage>
        <taxon>Bacteria</taxon>
        <taxon>Bacillati</taxon>
        <taxon>Actinomycetota</taxon>
        <taxon>Actinomycetes</taxon>
        <taxon>Mycobacteriales</taxon>
        <taxon>Mycobacteriaceae</taxon>
        <taxon>Mycobacterium</taxon>
    </lineage>
</organism>
<accession>Q9X7A0</accession>
<protein>
    <recommendedName>
        <fullName evidence="1">Small ribosomal subunit protein uS11</fullName>
    </recommendedName>
    <alternativeName>
        <fullName evidence="3">30S ribosomal protein S11</fullName>
    </alternativeName>
</protein>
<sequence length="138" mass="14747">MPPKKANAAGPKKGQKTRKREKKNIPYGAAHIKSTFNNTIVTITDQQGNVIAWASSGHVGFKGSRKSTPFAAQLAAENAARKAQEHGVRKVDVFVMGPGSGRETAIRSLQAAGLEVGAISDVTPQPHNGCRPPKRRRV</sequence>
<evidence type="ECO:0000255" key="1">
    <source>
        <dbReference type="HAMAP-Rule" id="MF_01310"/>
    </source>
</evidence>
<evidence type="ECO:0000256" key="2">
    <source>
        <dbReference type="SAM" id="MobiDB-lite"/>
    </source>
</evidence>
<evidence type="ECO:0000305" key="3"/>
<reference key="1">
    <citation type="journal article" date="2001" name="Nature">
        <title>Massive gene decay in the leprosy bacillus.</title>
        <authorList>
            <person name="Cole S.T."/>
            <person name="Eiglmeier K."/>
            <person name="Parkhill J."/>
            <person name="James K.D."/>
            <person name="Thomson N.R."/>
            <person name="Wheeler P.R."/>
            <person name="Honore N."/>
            <person name="Garnier T."/>
            <person name="Churcher C.M."/>
            <person name="Harris D.E."/>
            <person name="Mungall K.L."/>
            <person name="Basham D."/>
            <person name="Brown D."/>
            <person name="Chillingworth T."/>
            <person name="Connor R."/>
            <person name="Davies R.M."/>
            <person name="Devlin K."/>
            <person name="Duthoy S."/>
            <person name="Feltwell T."/>
            <person name="Fraser A."/>
            <person name="Hamlin N."/>
            <person name="Holroyd S."/>
            <person name="Hornsby T."/>
            <person name="Jagels K."/>
            <person name="Lacroix C."/>
            <person name="Maclean J."/>
            <person name="Moule S."/>
            <person name="Murphy L.D."/>
            <person name="Oliver K."/>
            <person name="Quail M.A."/>
            <person name="Rajandream M.A."/>
            <person name="Rutherford K.M."/>
            <person name="Rutter S."/>
            <person name="Seeger K."/>
            <person name="Simon S."/>
            <person name="Simmonds M."/>
            <person name="Skelton J."/>
            <person name="Squares R."/>
            <person name="Squares S."/>
            <person name="Stevens K."/>
            <person name="Taylor K."/>
            <person name="Whitehead S."/>
            <person name="Woodward J.R."/>
            <person name="Barrell B.G."/>
        </authorList>
    </citation>
    <scope>NUCLEOTIDE SEQUENCE [LARGE SCALE GENOMIC DNA]</scope>
    <source>
        <strain>TN</strain>
    </source>
</reference>
<comment type="function">
    <text evidence="1">Located on the platform of the 30S subunit, it bridges several disparate RNA helices of the 16S rRNA. Forms part of the Shine-Dalgarno cleft in the 70S ribosome.</text>
</comment>
<comment type="subunit">
    <text evidence="1">Part of the 30S ribosomal subunit. Interacts with proteins S7 and S18. Binds to IF-3.</text>
</comment>
<comment type="similarity">
    <text evidence="1">Belongs to the universal ribosomal protein uS11 family.</text>
</comment>
<keyword id="KW-1185">Reference proteome</keyword>
<keyword id="KW-0687">Ribonucleoprotein</keyword>
<keyword id="KW-0689">Ribosomal protein</keyword>
<keyword id="KW-0694">RNA-binding</keyword>
<keyword id="KW-0699">rRNA-binding</keyword>
<gene>
    <name evidence="1" type="primary">rpsK</name>
    <name type="ordered locus">ML1959</name>
    <name type="ORF">MLCB1222.29c</name>
</gene>
<dbReference type="EMBL" id="AL049491">
    <property type="protein sequence ID" value="CAB39835.1"/>
    <property type="molecule type" value="Genomic_DNA"/>
</dbReference>
<dbReference type="EMBL" id="AL583923">
    <property type="protein sequence ID" value="CAC30914.1"/>
    <property type="molecule type" value="Genomic_DNA"/>
</dbReference>
<dbReference type="PIR" id="B87154">
    <property type="entry name" value="B87154"/>
</dbReference>
<dbReference type="RefSeq" id="NP_302324.1">
    <property type="nucleotide sequence ID" value="NC_002677.1"/>
</dbReference>
<dbReference type="RefSeq" id="WP_010908645.1">
    <property type="nucleotide sequence ID" value="NC_002677.1"/>
</dbReference>
<dbReference type="SMR" id="Q9X7A0"/>
<dbReference type="STRING" id="272631.gene:17575811"/>
<dbReference type="KEGG" id="mle:ML1959"/>
<dbReference type="PATRIC" id="fig|272631.5.peg.3709"/>
<dbReference type="Leproma" id="ML1959"/>
<dbReference type="eggNOG" id="COG0100">
    <property type="taxonomic scope" value="Bacteria"/>
</dbReference>
<dbReference type="HOGENOM" id="CLU_072439_5_0_11"/>
<dbReference type="OrthoDB" id="9806415at2"/>
<dbReference type="Proteomes" id="UP000000806">
    <property type="component" value="Chromosome"/>
</dbReference>
<dbReference type="GO" id="GO:1990904">
    <property type="term" value="C:ribonucleoprotein complex"/>
    <property type="evidence" value="ECO:0007669"/>
    <property type="project" value="UniProtKB-KW"/>
</dbReference>
<dbReference type="GO" id="GO:0005840">
    <property type="term" value="C:ribosome"/>
    <property type="evidence" value="ECO:0007669"/>
    <property type="project" value="UniProtKB-KW"/>
</dbReference>
<dbReference type="GO" id="GO:0019843">
    <property type="term" value="F:rRNA binding"/>
    <property type="evidence" value="ECO:0007669"/>
    <property type="project" value="UniProtKB-UniRule"/>
</dbReference>
<dbReference type="GO" id="GO:0003735">
    <property type="term" value="F:structural constituent of ribosome"/>
    <property type="evidence" value="ECO:0007669"/>
    <property type="project" value="InterPro"/>
</dbReference>
<dbReference type="GO" id="GO:0006412">
    <property type="term" value="P:translation"/>
    <property type="evidence" value="ECO:0007669"/>
    <property type="project" value="UniProtKB-UniRule"/>
</dbReference>
<dbReference type="FunFam" id="3.30.420.80:FF:000001">
    <property type="entry name" value="30S ribosomal protein S11"/>
    <property type="match status" value="1"/>
</dbReference>
<dbReference type="Gene3D" id="3.30.420.80">
    <property type="entry name" value="Ribosomal protein S11"/>
    <property type="match status" value="1"/>
</dbReference>
<dbReference type="HAMAP" id="MF_01310">
    <property type="entry name" value="Ribosomal_uS11"/>
    <property type="match status" value="1"/>
</dbReference>
<dbReference type="InterPro" id="IPR001971">
    <property type="entry name" value="Ribosomal_uS11"/>
</dbReference>
<dbReference type="InterPro" id="IPR019981">
    <property type="entry name" value="Ribosomal_uS11_bac-type"/>
</dbReference>
<dbReference type="InterPro" id="IPR018102">
    <property type="entry name" value="Ribosomal_uS11_CS"/>
</dbReference>
<dbReference type="InterPro" id="IPR036967">
    <property type="entry name" value="Ribosomal_uS11_sf"/>
</dbReference>
<dbReference type="NCBIfam" id="NF003698">
    <property type="entry name" value="PRK05309.1"/>
    <property type="match status" value="1"/>
</dbReference>
<dbReference type="NCBIfam" id="TIGR03632">
    <property type="entry name" value="uS11_bact"/>
    <property type="match status" value="1"/>
</dbReference>
<dbReference type="PANTHER" id="PTHR11759">
    <property type="entry name" value="40S RIBOSOMAL PROTEIN S14/30S RIBOSOMAL PROTEIN S11"/>
    <property type="match status" value="1"/>
</dbReference>
<dbReference type="Pfam" id="PF00411">
    <property type="entry name" value="Ribosomal_S11"/>
    <property type="match status" value="1"/>
</dbReference>
<dbReference type="PIRSF" id="PIRSF002131">
    <property type="entry name" value="Ribosomal_S11"/>
    <property type="match status" value="1"/>
</dbReference>
<dbReference type="SUPFAM" id="SSF53137">
    <property type="entry name" value="Translational machinery components"/>
    <property type="match status" value="1"/>
</dbReference>
<dbReference type="PROSITE" id="PS00054">
    <property type="entry name" value="RIBOSOMAL_S11"/>
    <property type="match status" value="1"/>
</dbReference>
<feature type="chain" id="PRO_0000123178" description="Small ribosomal subunit protein uS11">
    <location>
        <begin position="1"/>
        <end position="138"/>
    </location>
</feature>
<feature type="region of interest" description="Disordered" evidence="2">
    <location>
        <begin position="1"/>
        <end position="23"/>
    </location>
</feature>
<feature type="compositionally biased region" description="Low complexity" evidence="2">
    <location>
        <begin position="1"/>
        <end position="12"/>
    </location>
</feature>
<feature type="compositionally biased region" description="Basic residues" evidence="2">
    <location>
        <begin position="13"/>
        <end position="22"/>
    </location>
</feature>